<sequence length="503" mass="54238">MKPAIALEGISKSFPGVRALSDVSLALYPGSVTALVGENGAGKSTLVKILTGIYQPDAGTIRLGDTETTFPTALAASRAGVTAIHQETVLFDELSVAENIFLGHAPRNRFGLIDWKQLNADAQALLGRAGADFDPTIRLRDLGIAKKHLVAIARALSVDARVVIMDEPTAALSHKEIHELYDLIERLKADGKAVLFISHKFDEIFRIADRYTVFRDGAMIGEGLIADVSQDDLVRMMVGRAVGSVYPKKEVTIGQPVLTVSGYRHPTEFEDINFELRRGEILGFYGLVGAGRSEFMQSLIGITRPSAGAVKLDGEVLVIRSPAEAIRAGIVYVPEERGRQGAIIGMPIFQNVTLPSLSHTSRSGFLRLAEEFALAREYTSRLDLRAAALDQDVGTLSGGNQQKVVIAKWLATRPKVIILDEPTKGIDIGSKAAVHAFMSELAAQGLSVIMVSSEIPEIMGMSDRVIVMREGRVAGRYERSELTAEKLVRAAAGIETQADGRAA</sequence>
<reference key="1">
    <citation type="journal article" date="2001" name="Proc. Natl. Acad. Sci. U.S.A.">
        <title>Analysis of the chromosome sequence of the legume symbiont Sinorhizobium meliloti strain 1021.</title>
        <authorList>
            <person name="Capela D."/>
            <person name="Barloy-Hubler F."/>
            <person name="Gouzy J."/>
            <person name="Bothe G."/>
            <person name="Ampe F."/>
            <person name="Batut J."/>
            <person name="Boistard P."/>
            <person name="Becker A."/>
            <person name="Boutry M."/>
            <person name="Cadieu E."/>
            <person name="Dreano S."/>
            <person name="Gloux S."/>
            <person name="Godrie T."/>
            <person name="Goffeau A."/>
            <person name="Kahn D."/>
            <person name="Kiss E."/>
            <person name="Lelaure V."/>
            <person name="Masuy D."/>
            <person name="Pohl T."/>
            <person name="Portetelle D."/>
            <person name="Puehler A."/>
            <person name="Purnelle B."/>
            <person name="Ramsperger U."/>
            <person name="Renard C."/>
            <person name="Thebault P."/>
            <person name="Vandenbol M."/>
            <person name="Weidner S."/>
            <person name="Galibert F."/>
        </authorList>
    </citation>
    <scope>NUCLEOTIDE SEQUENCE [LARGE SCALE GENOMIC DNA]</scope>
    <source>
        <strain>1021</strain>
    </source>
</reference>
<reference key="2">
    <citation type="journal article" date="2001" name="Science">
        <title>The composite genome of the legume symbiont Sinorhizobium meliloti.</title>
        <authorList>
            <person name="Galibert F."/>
            <person name="Finan T.M."/>
            <person name="Long S.R."/>
            <person name="Puehler A."/>
            <person name="Abola P."/>
            <person name="Ampe F."/>
            <person name="Barloy-Hubler F."/>
            <person name="Barnett M.J."/>
            <person name="Becker A."/>
            <person name="Boistard P."/>
            <person name="Bothe G."/>
            <person name="Boutry M."/>
            <person name="Bowser L."/>
            <person name="Buhrmester J."/>
            <person name="Cadieu E."/>
            <person name="Capela D."/>
            <person name="Chain P."/>
            <person name="Cowie A."/>
            <person name="Davis R.W."/>
            <person name="Dreano S."/>
            <person name="Federspiel N.A."/>
            <person name="Fisher R.F."/>
            <person name="Gloux S."/>
            <person name="Godrie T."/>
            <person name="Goffeau A."/>
            <person name="Golding B."/>
            <person name="Gouzy J."/>
            <person name="Gurjal M."/>
            <person name="Hernandez-Lucas I."/>
            <person name="Hong A."/>
            <person name="Huizar L."/>
            <person name="Hyman R.W."/>
            <person name="Jones T."/>
            <person name="Kahn D."/>
            <person name="Kahn M.L."/>
            <person name="Kalman S."/>
            <person name="Keating D.H."/>
            <person name="Kiss E."/>
            <person name="Komp C."/>
            <person name="Lelaure V."/>
            <person name="Masuy D."/>
            <person name="Palm C."/>
            <person name="Peck M.C."/>
            <person name="Pohl T.M."/>
            <person name="Portetelle D."/>
            <person name="Purnelle B."/>
            <person name="Ramsperger U."/>
            <person name="Surzycki R."/>
            <person name="Thebault P."/>
            <person name="Vandenbol M."/>
            <person name="Vorhoelter F.J."/>
            <person name="Weidner S."/>
            <person name="Wells D.H."/>
            <person name="Wong K."/>
            <person name="Yeh K.-C."/>
            <person name="Batut J."/>
        </authorList>
    </citation>
    <scope>NUCLEOTIDE SEQUENCE [LARGE SCALE GENOMIC DNA]</scope>
    <source>
        <strain>1021</strain>
    </source>
</reference>
<protein>
    <recommendedName>
        <fullName evidence="1">Ribose import ATP-binding protein RbsA 1</fullName>
        <ecNumber evidence="1">7.5.2.7</ecNumber>
    </recommendedName>
</protein>
<keyword id="KW-0067">ATP-binding</keyword>
<keyword id="KW-0997">Cell inner membrane</keyword>
<keyword id="KW-1003">Cell membrane</keyword>
<keyword id="KW-0472">Membrane</keyword>
<keyword id="KW-0547">Nucleotide-binding</keyword>
<keyword id="KW-1185">Reference proteome</keyword>
<keyword id="KW-0677">Repeat</keyword>
<keyword id="KW-0762">Sugar transport</keyword>
<keyword id="KW-1278">Translocase</keyword>
<keyword id="KW-0813">Transport</keyword>
<proteinExistence type="inferred from homology"/>
<accession>Q92S10</accession>
<gene>
    <name evidence="1" type="primary">rbsA1</name>
    <name type="ordered locus">R00631</name>
    <name type="ORF">SMc02325</name>
</gene>
<dbReference type="EC" id="7.5.2.7" evidence="1"/>
<dbReference type="EMBL" id="AL591688">
    <property type="protein sequence ID" value="CAC45203.1"/>
    <property type="molecule type" value="Genomic_DNA"/>
</dbReference>
<dbReference type="RefSeq" id="NP_384737.1">
    <property type="nucleotide sequence ID" value="NC_003047.1"/>
</dbReference>
<dbReference type="RefSeq" id="WP_010968715.1">
    <property type="nucleotide sequence ID" value="NC_003047.1"/>
</dbReference>
<dbReference type="SMR" id="Q92S10"/>
<dbReference type="EnsemblBacteria" id="CAC45203">
    <property type="protein sequence ID" value="CAC45203"/>
    <property type="gene ID" value="SMc02325"/>
</dbReference>
<dbReference type="KEGG" id="sme:SMc02325"/>
<dbReference type="PATRIC" id="fig|266834.11.peg.2003"/>
<dbReference type="eggNOG" id="COG1129">
    <property type="taxonomic scope" value="Bacteria"/>
</dbReference>
<dbReference type="HOGENOM" id="CLU_000604_92_3_5"/>
<dbReference type="OrthoDB" id="9805029at2"/>
<dbReference type="Proteomes" id="UP000001976">
    <property type="component" value="Chromosome"/>
</dbReference>
<dbReference type="GO" id="GO:0005886">
    <property type="term" value="C:plasma membrane"/>
    <property type="evidence" value="ECO:0007669"/>
    <property type="project" value="UniProtKB-SubCell"/>
</dbReference>
<dbReference type="GO" id="GO:0015611">
    <property type="term" value="F:ABC-type D-ribose transporter activity"/>
    <property type="evidence" value="ECO:0007669"/>
    <property type="project" value="UniProtKB-EC"/>
</dbReference>
<dbReference type="GO" id="GO:0005524">
    <property type="term" value="F:ATP binding"/>
    <property type="evidence" value="ECO:0007669"/>
    <property type="project" value="UniProtKB-KW"/>
</dbReference>
<dbReference type="GO" id="GO:0016887">
    <property type="term" value="F:ATP hydrolysis activity"/>
    <property type="evidence" value="ECO:0007669"/>
    <property type="project" value="InterPro"/>
</dbReference>
<dbReference type="CDD" id="cd03216">
    <property type="entry name" value="ABC_Carb_Monos_I"/>
    <property type="match status" value="1"/>
</dbReference>
<dbReference type="CDD" id="cd03215">
    <property type="entry name" value="ABC_Carb_Monos_II"/>
    <property type="match status" value="1"/>
</dbReference>
<dbReference type="FunFam" id="3.40.50.300:FF:000127">
    <property type="entry name" value="Ribose import ATP-binding protein RbsA"/>
    <property type="match status" value="1"/>
</dbReference>
<dbReference type="Gene3D" id="3.40.50.300">
    <property type="entry name" value="P-loop containing nucleotide triphosphate hydrolases"/>
    <property type="match status" value="2"/>
</dbReference>
<dbReference type="InterPro" id="IPR003593">
    <property type="entry name" value="AAA+_ATPase"/>
</dbReference>
<dbReference type="InterPro" id="IPR050107">
    <property type="entry name" value="ABC_carbohydrate_import_ATPase"/>
</dbReference>
<dbReference type="InterPro" id="IPR003439">
    <property type="entry name" value="ABC_transporter-like_ATP-bd"/>
</dbReference>
<dbReference type="InterPro" id="IPR017871">
    <property type="entry name" value="ABC_transporter-like_CS"/>
</dbReference>
<dbReference type="InterPro" id="IPR027417">
    <property type="entry name" value="P-loop_NTPase"/>
</dbReference>
<dbReference type="PANTHER" id="PTHR43790">
    <property type="entry name" value="CARBOHYDRATE TRANSPORT ATP-BINDING PROTEIN MG119-RELATED"/>
    <property type="match status" value="1"/>
</dbReference>
<dbReference type="PANTHER" id="PTHR43790:SF3">
    <property type="entry name" value="D-ALLOSE IMPORT ATP-BINDING PROTEIN ALSA-RELATED"/>
    <property type="match status" value="1"/>
</dbReference>
<dbReference type="Pfam" id="PF00005">
    <property type="entry name" value="ABC_tran"/>
    <property type="match status" value="2"/>
</dbReference>
<dbReference type="SMART" id="SM00382">
    <property type="entry name" value="AAA"/>
    <property type="match status" value="2"/>
</dbReference>
<dbReference type="SUPFAM" id="SSF52540">
    <property type="entry name" value="P-loop containing nucleoside triphosphate hydrolases"/>
    <property type="match status" value="2"/>
</dbReference>
<dbReference type="PROSITE" id="PS00211">
    <property type="entry name" value="ABC_TRANSPORTER_1"/>
    <property type="match status" value="1"/>
</dbReference>
<dbReference type="PROSITE" id="PS50893">
    <property type="entry name" value="ABC_TRANSPORTER_2"/>
    <property type="match status" value="2"/>
</dbReference>
<dbReference type="PROSITE" id="PS51254">
    <property type="entry name" value="RBSA"/>
    <property type="match status" value="1"/>
</dbReference>
<evidence type="ECO:0000255" key="1">
    <source>
        <dbReference type="HAMAP-Rule" id="MF_01716"/>
    </source>
</evidence>
<feature type="chain" id="PRO_0000261088" description="Ribose import ATP-binding protein RbsA 1">
    <location>
        <begin position="1"/>
        <end position="503"/>
    </location>
</feature>
<feature type="domain" description="ABC transporter 1" evidence="1">
    <location>
        <begin position="5"/>
        <end position="241"/>
    </location>
</feature>
<feature type="domain" description="ABC transporter 2" evidence="1">
    <location>
        <begin position="253"/>
        <end position="495"/>
    </location>
</feature>
<feature type="binding site" evidence="1">
    <location>
        <begin position="37"/>
        <end position="44"/>
    </location>
    <ligand>
        <name>ATP</name>
        <dbReference type="ChEBI" id="CHEBI:30616"/>
    </ligand>
</feature>
<name>RBSA1_RHIME</name>
<organism>
    <name type="scientific">Rhizobium meliloti (strain 1021)</name>
    <name type="common">Ensifer meliloti</name>
    <name type="synonym">Sinorhizobium meliloti</name>
    <dbReference type="NCBI Taxonomy" id="266834"/>
    <lineage>
        <taxon>Bacteria</taxon>
        <taxon>Pseudomonadati</taxon>
        <taxon>Pseudomonadota</taxon>
        <taxon>Alphaproteobacteria</taxon>
        <taxon>Hyphomicrobiales</taxon>
        <taxon>Rhizobiaceae</taxon>
        <taxon>Sinorhizobium/Ensifer group</taxon>
        <taxon>Sinorhizobium</taxon>
    </lineage>
</organism>
<comment type="function">
    <text evidence="1">Part of the ABC transporter complex RbsABC involved in ribose import. Responsible for energy coupling to the transport system.</text>
</comment>
<comment type="catalytic activity">
    <reaction evidence="1">
        <text>D-ribose(out) + ATP + H2O = D-ribose(in) + ADP + phosphate + H(+)</text>
        <dbReference type="Rhea" id="RHEA:29903"/>
        <dbReference type="ChEBI" id="CHEBI:15377"/>
        <dbReference type="ChEBI" id="CHEBI:15378"/>
        <dbReference type="ChEBI" id="CHEBI:30616"/>
        <dbReference type="ChEBI" id="CHEBI:43474"/>
        <dbReference type="ChEBI" id="CHEBI:47013"/>
        <dbReference type="ChEBI" id="CHEBI:456216"/>
        <dbReference type="EC" id="7.5.2.7"/>
    </reaction>
</comment>
<comment type="subunit">
    <text evidence="1">The complex is composed of an ATP-binding protein (RbsA), two transmembrane proteins (RbsC) and a solute-binding protein (RbsB).</text>
</comment>
<comment type="subcellular location">
    <subcellularLocation>
        <location evidence="1">Cell inner membrane</location>
        <topology evidence="1">Peripheral membrane protein</topology>
    </subcellularLocation>
</comment>
<comment type="similarity">
    <text evidence="1">Belongs to the ABC transporter superfamily. Ribose importer (TC 3.A.1.2.1) family.</text>
</comment>